<organism>
    <name type="scientific">Staphylococcus aureus (strain Newman)</name>
    <dbReference type="NCBI Taxonomy" id="426430"/>
    <lineage>
        <taxon>Bacteria</taxon>
        <taxon>Bacillati</taxon>
        <taxon>Bacillota</taxon>
        <taxon>Bacilli</taxon>
        <taxon>Bacillales</taxon>
        <taxon>Staphylococcaceae</taxon>
        <taxon>Staphylococcus</taxon>
    </lineage>
</organism>
<gene>
    <name evidence="1" type="primary">rimM</name>
    <name type="ordered locus">NWMN_1149</name>
</gene>
<dbReference type="EMBL" id="AP009351">
    <property type="protein sequence ID" value="BAF67421.1"/>
    <property type="molecule type" value="Genomic_DNA"/>
</dbReference>
<dbReference type="RefSeq" id="WP_001261987.1">
    <property type="nucleotide sequence ID" value="NZ_JBBIAE010000001.1"/>
</dbReference>
<dbReference type="SMR" id="A6QGD9"/>
<dbReference type="KEGG" id="sae:NWMN_1149"/>
<dbReference type="HOGENOM" id="CLU_077636_3_1_9"/>
<dbReference type="Proteomes" id="UP000006386">
    <property type="component" value="Chromosome"/>
</dbReference>
<dbReference type="GO" id="GO:0005737">
    <property type="term" value="C:cytoplasm"/>
    <property type="evidence" value="ECO:0007669"/>
    <property type="project" value="UniProtKB-SubCell"/>
</dbReference>
<dbReference type="GO" id="GO:0005840">
    <property type="term" value="C:ribosome"/>
    <property type="evidence" value="ECO:0007669"/>
    <property type="project" value="InterPro"/>
</dbReference>
<dbReference type="GO" id="GO:0043022">
    <property type="term" value="F:ribosome binding"/>
    <property type="evidence" value="ECO:0007669"/>
    <property type="project" value="InterPro"/>
</dbReference>
<dbReference type="GO" id="GO:0042274">
    <property type="term" value="P:ribosomal small subunit biogenesis"/>
    <property type="evidence" value="ECO:0007669"/>
    <property type="project" value="UniProtKB-UniRule"/>
</dbReference>
<dbReference type="GO" id="GO:0006364">
    <property type="term" value="P:rRNA processing"/>
    <property type="evidence" value="ECO:0007669"/>
    <property type="project" value="UniProtKB-UniRule"/>
</dbReference>
<dbReference type="Gene3D" id="2.30.30.240">
    <property type="entry name" value="PRC-barrel domain"/>
    <property type="match status" value="1"/>
</dbReference>
<dbReference type="Gene3D" id="2.40.30.60">
    <property type="entry name" value="RimM"/>
    <property type="match status" value="1"/>
</dbReference>
<dbReference type="HAMAP" id="MF_00014">
    <property type="entry name" value="Ribosome_mat_RimM"/>
    <property type="match status" value="1"/>
</dbReference>
<dbReference type="InterPro" id="IPR011033">
    <property type="entry name" value="PRC_barrel-like_sf"/>
</dbReference>
<dbReference type="InterPro" id="IPR056792">
    <property type="entry name" value="PRC_RimM"/>
</dbReference>
<dbReference type="InterPro" id="IPR011961">
    <property type="entry name" value="RimM"/>
</dbReference>
<dbReference type="InterPro" id="IPR002676">
    <property type="entry name" value="RimM_N"/>
</dbReference>
<dbReference type="InterPro" id="IPR036976">
    <property type="entry name" value="RimM_N_sf"/>
</dbReference>
<dbReference type="InterPro" id="IPR009000">
    <property type="entry name" value="Transl_B-barrel_sf"/>
</dbReference>
<dbReference type="NCBIfam" id="TIGR02273">
    <property type="entry name" value="16S_RimM"/>
    <property type="match status" value="1"/>
</dbReference>
<dbReference type="PANTHER" id="PTHR33692">
    <property type="entry name" value="RIBOSOME MATURATION FACTOR RIMM"/>
    <property type="match status" value="1"/>
</dbReference>
<dbReference type="PANTHER" id="PTHR33692:SF1">
    <property type="entry name" value="RIBOSOME MATURATION FACTOR RIMM"/>
    <property type="match status" value="1"/>
</dbReference>
<dbReference type="Pfam" id="PF24986">
    <property type="entry name" value="PRC_RimM"/>
    <property type="match status" value="1"/>
</dbReference>
<dbReference type="Pfam" id="PF01782">
    <property type="entry name" value="RimM"/>
    <property type="match status" value="1"/>
</dbReference>
<dbReference type="SUPFAM" id="SSF50346">
    <property type="entry name" value="PRC-barrel domain"/>
    <property type="match status" value="1"/>
</dbReference>
<dbReference type="SUPFAM" id="SSF50447">
    <property type="entry name" value="Translation proteins"/>
    <property type="match status" value="1"/>
</dbReference>
<keyword id="KW-0143">Chaperone</keyword>
<keyword id="KW-0963">Cytoplasm</keyword>
<keyword id="KW-0690">Ribosome biogenesis</keyword>
<keyword id="KW-0698">rRNA processing</keyword>
<accession>A6QGD9</accession>
<proteinExistence type="inferred from homology"/>
<sequence length="167" mass="19073">MRVEVGQIVNTHGIKGEIKVKSNSDFTDVRFQPGQVLTVVHNNNDLEYTVKSHRVHKGLHMLTFEGINNINDIEHLKGSSIYQERDHEDIVLEENEFYYSDIIGCTVFDDQETPIGRVINIFETGANDVWVIKGSKEYLIPYIADVVKEVDVENKKIIITPMEGLLD</sequence>
<name>RIMM_STAAE</name>
<comment type="function">
    <text evidence="1">An accessory protein needed during the final step in the assembly of 30S ribosomal subunit, possibly for assembly of the head region. Essential for efficient processing of 16S rRNA. May be needed both before and after RbfA during the maturation of 16S rRNA. It has affinity for free ribosomal 30S subunits but not for 70S ribosomes.</text>
</comment>
<comment type="subunit">
    <text evidence="1">Binds ribosomal protein uS19.</text>
</comment>
<comment type="subcellular location">
    <subcellularLocation>
        <location evidence="1">Cytoplasm</location>
    </subcellularLocation>
</comment>
<comment type="domain">
    <text evidence="1">The PRC barrel domain binds ribosomal protein uS19.</text>
</comment>
<comment type="similarity">
    <text evidence="1">Belongs to the RimM family.</text>
</comment>
<reference key="1">
    <citation type="journal article" date="2008" name="J. Bacteriol.">
        <title>Genome sequence of Staphylococcus aureus strain Newman and comparative analysis of staphylococcal genomes: polymorphism and evolution of two major pathogenicity islands.</title>
        <authorList>
            <person name="Baba T."/>
            <person name="Bae T."/>
            <person name="Schneewind O."/>
            <person name="Takeuchi F."/>
            <person name="Hiramatsu K."/>
        </authorList>
    </citation>
    <scope>NUCLEOTIDE SEQUENCE [LARGE SCALE GENOMIC DNA]</scope>
    <source>
        <strain>Newman</strain>
    </source>
</reference>
<protein>
    <recommendedName>
        <fullName evidence="1">Ribosome maturation factor RimM</fullName>
    </recommendedName>
</protein>
<feature type="chain" id="PRO_1000070962" description="Ribosome maturation factor RimM">
    <location>
        <begin position="1"/>
        <end position="167"/>
    </location>
</feature>
<feature type="domain" description="PRC barrel" evidence="1">
    <location>
        <begin position="94"/>
        <end position="165"/>
    </location>
</feature>
<evidence type="ECO:0000255" key="1">
    <source>
        <dbReference type="HAMAP-Rule" id="MF_00014"/>
    </source>
</evidence>